<dbReference type="EC" id="3.7.1.-" evidence="5"/>
<dbReference type="EMBL" id="KV878980">
    <property type="protein sequence ID" value="OJJ98487.1"/>
    <property type="status" value="ALT_SEQ"/>
    <property type="molecule type" value="Genomic_DNA"/>
</dbReference>
<dbReference type="SMR" id="P9WEZ7"/>
<dbReference type="ESTHER" id="aspa1-acrc">
    <property type="family name" value="Duf_1100-S"/>
</dbReference>
<dbReference type="Proteomes" id="UP000184546">
    <property type="component" value="Unassembled WGS sequence"/>
</dbReference>
<dbReference type="GO" id="GO:0016787">
    <property type="term" value="F:hydrolase activity"/>
    <property type="evidence" value="ECO:0007669"/>
    <property type="project" value="UniProtKB-KW"/>
</dbReference>
<dbReference type="Gene3D" id="1.20.1440.110">
    <property type="entry name" value="acylaminoacyl peptidase"/>
    <property type="match status" value="1"/>
</dbReference>
<dbReference type="Gene3D" id="3.40.50.1820">
    <property type="entry name" value="alpha/beta hydrolase"/>
    <property type="match status" value="1"/>
</dbReference>
<dbReference type="InterPro" id="IPR000073">
    <property type="entry name" value="AB_hydrolase_1"/>
</dbReference>
<dbReference type="InterPro" id="IPR029058">
    <property type="entry name" value="AB_hydrolase_fold"/>
</dbReference>
<dbReference type="InterPro" id="IPR050261">
    <property type="entry name" value="FrsA_esterase"/>
</dbReference>
<dbReference type="PANTHER" id="PTHR22946:SF13">
    <property type="entry name" value="ALPHA_BETA HYDROLASE PSOB"/>
    <property type="match status" value="1"/>
</dbReference>
<dbReference type="PANTHER" id="PTHR22946">
    <property type="entry name" value="DIENELACTONE HYDROLASE DOMAIN-CONTAINING PROTEIN-RELATED"/>
    <property type="match status" value="1"/>
</dbReference>
<dbReference type="Pfam" id="PF12697">
    <property type="entry name" value="Abhydrolase_6"/>
    <property type="match status" value="1"/>
</dbReference>
<dbReference type="SUPFAM" id="SSF53474">
    <property type="entry name" value="alpha/beta-Hydrolases"/>
    <property type="match status" value="1"/>
</dbReference>
<name>ACRC_ASPA1</name>
<comment type="function">
    <text evidence="2 5">Hydrolase; part of the cluster that mediates the biosynthesis of acurin A, a highly reduced polyketide coupled to a serine via a peptide bond (PubMed:32234543). The activities of the highly reducing polyketide synthase acrA and the nonribosomal peptide synthetase acrB are collectively responsible for the synthesis of the acurin A core structure with a heptaketide backbone produced by acrA covalently fused to a L-serine by acrB (PubMed:32234543). After the formation of the PK-NRP hybrid product, it is detached from acrB by reductive release to set up the formation of the lactam ring by aldol condensation (Probable). The hydrolyase acrC then catalyzes water loss to generate a double bond in the ring (Probable). This double bond is probably reduced, which is followed by three oxidations at C-22 to generate the carboxylic acid moiety, involving probably the FAD-binding monooxygenase acrE and the cytochrome P450 monooxygenases acrD and acrF (Probable). Finally, a last methylation step performed by the O-methyltransferase acrG leads to the production of acurin A (Probable).</text>
</comment>
<comment type="pathway">
    <text evidence="2">Secondary metabolite biosynthesis.</text>
</comment>
<comment type="induction">
    <text evidence="2">Expression is positively regulated by the acurin A cluster-specific transcription regulator acrR.</text>
</comment>
<comment type="disruption phenotype">
    <text evidence="2">Abolishes the production of acurin A.</text>
</comment>
<comment type="similarity">
    <text evidence="4">Belongs to the AB hydrolase superfamily. FUS2 hydrolase family.</text>
</comment>
<comment type="sequence caution" evidence="4">
    <conflict type="erroneous gene model prediction">
        <sequence resource="EMBL-CDS" id="OJJ98487"/>
    </conflict>
    <text>The predicted gene ASPACDRAFT_61993 has been split into 2 genes: ASPACDRAFT_61993-1 and ASPACDRAFT_61993-2.</text>
</comment>
<accession>P9WEZ7</accession>
<accession>A0A1L9WR54</accession>
<evidence type="ECO:0000250" key="1">
    <source>
        <dbReference type="UniProtKB" id="Q93NG6"/>
    </source>
</evidence>
<evidence type="ECO:0000269" key="2">
    <source>
    </source>
</evidence>
<evidence type="ECO:0000303" key="3">
    <source>
    </source>
</evidence>
<evidence type="ECO:0000305" key="4"/>
<evidence type="ECO:0000305" key="5">
    <source>
    </source>
</evidence>
<reference key="1">
    <citation type="journal article" date="2017" name="Genome Biol.">
        <title>Comparative genomics reveals high biological diversity and specific adaptations in the industrially and medically important fungal genus Aspergillus.</title>
        <authorList>
            <person name="de Vries R.P."/>
            <person name="Riley R."/>
            <person name="Wiebenga A."/>
            <person name="Aguilar-Osorio G."/>
            <person name="Amillis S."/>
            <person name="Uchima C.A."/>
            <person name="Anderluh G."/>
            <person name="Asadollahi M."/>
            <person name="Askin M."/>
            <person name="Barry K."/>
            <person name="Battaglia E."/>
            <person name="Bayram O."/>
            <person name="Benocci T."/>
            <person name="Braus-Stromeyer S.A."/>
            <person name="Caldana C."/>
            <person name="Canovas D."/>
            <person name="Cerqueira G.C."/>
            <person name="Chen F."/>
            <person name="Chen W."/>
            <person name="Choi C."/>
            <person name="Clum A."/>
            <person name="Dos Santos R.A."/>
            <person name="Damasio A.R."/>
            <person name="Diallinas G."/>
            <person name="Emri T."/>
            <person name="Fekete E."/>
            <person name="Flipphi M."/>
            <person name="Freyberg S."/>
            <person name="Gallo A."/>
            <person name="Gournas C."/>
            <person name="Habgood R."/>
            <person name="Hainaut M."/>
            <person name="Harispe M.L."/>
            <person name="Henrissat B."/>
            <person name="Hilden K.S."/>
            <person name="Hope R."/>
            <person name="Hossain A."/>
            <person name="Karabika E."/>
            <person name="Karaffa L."/>
            <person name="Karanyi Z."/>
            <person name="Krasevec N."/>
            <person name="Kuo A."/>
            <person name="Kusch H."/>
            <person name="LaButti K."/>
            <person name="Lagendijk E.L."/>
            <person name="Lapidus A."/>
            <person name="Levasseur A."/>
            <person name="Lindquist E."/>
            <person name="Lipzen A."/>
            <person name="Logrieco A.F."/>
            <person name="MacCabe A."/>
            <person name="Maekelae M.R."/>
            <person name="Malavazi I."/>
            <person name="Melin P."/>
            <person name="Meyer V."/>
            <person name="Mielnichuk N."/>
            <person name="Miskei M."/>
            <person name="Molnar A.P."/>
            <person name="Mule G."/>
            <person name="Ngan C.Y."/>
            <person name="Orejas M."/>
            <person name="Orosz E."/>
            <person name="Ouedraogo J.P."/>
            <person name="Overkamp K.M."/>
            <person name="Park H.-S."/>
            <person name="Perrone G."/>
            <person name="Piumi F."/>
            <person name="Punt P.J."/>
            <person name="Ram A.F."/>
            <person name="Ramon A."/>
            <person name="Rauscher S."/>
            <person name="Record E."/>
            <person name="Riano-Pachon D.M."/>
            <person name="Robert V."/>
            <person name="Roehrig J."/>
            <person name="Ruller R."/>
            <person name="Salamov A."/>
            <person name="Salih N.S."/>
            <person name="Samson R.A."/>
            <person name="Sandor E."/>
            <person name="Sanguinetti M."/>
            <person name="Schuetze T."/>
            <person name="Sepcic K."/>
            <person name="Shelest E."/>
            <person name="Sherlock G."/>
            <person name="Sophianopoulou V."/>
            <person name="Squina F.M."/>
            <person name="Sun H."/>
            <person name="Susca A."/>
            <person name="Todd R.B."/>
            <person name="Tsang A."/>
            <person name="Unkles S.E."/>
            <person name="van de Wiele N."/>
            <person name="van Rossen-Uffink D."/>
            <person name="Oliveira J.V."/>
            <person name="Vesth T.C."/>
            <person name="Visser J."/>
            <person name="Yu J.-H."/>
            <person name="Zhou M."/>
            <person name="Andersen M.R."/>
            <person name="Archer D.B."/>
            <person name="Baker S.E."/>
            <person name="Benoit I."/>
            <person name="Brakhage A.A."/>
            <person name="Braus G.H."/>
            <person name="Fischer R."/>
            <person name="Frisvad J.C."/>
            <person name="Goldman G.H."/>
            <person name="Houbraken J."/>
            <person name="Oakley B."/>
            <person name="Pocsi I."/>
            <person name="Scazzocchio C."/>
            <person name="Seiboth B."/>
            <person name="vanKuyk P.A."/>
            <person name="Wortman J."/>
            <person name="Dyer P.S."/>
            <person name="Grigoriev I.V."/>
        </authorList>
    </citation>
    <scope>NUCLEOTIDE SEQUENCE [LARGE SCALE GENOMIC DNA]</scope>
    <source>
        <strain>ATCC 16872 / CBS 172.66 / WB 5094</strain>
    </source>
</reference>
<reference key="2">
    <citation type="journal article" date="2020" name="Fungal Genet. Biol.">
        <title>Acurin A, a novel hybrid compound, biosynthesized by individually translated PKS- and NRPS-encoding genes in Aspergillus aculeatus.</title>
        <authorList>
            <person name="Wolff P.B."/>
            <person name="Nielsen M.L."/>
            <person name="Slot J.C."/>
            <person name="Andersen L.N."/>
            <person name="Petersen L.M."/>
            <person name="Isbrandt T."/>
            <person name="Holm D.K."/>
            <person name="Mortensen U.H."/>
            <person name="Noedvig C.S."/>
            <person name="Larsen T.O."/>
            <person name="Hoof J.B."/>
        </authorList>
    </citation>
    <scope>FUNCTION</scope>
    <scope>DISRUPTION PHENOTYPE</scope>
    <scope>PATHWAY</scope>
    <scope>INDUCTION</scope>
</reference>
<proteinExistence type="evidence at transcript level"/>
<organism>
    <name type="scientific">Aspergillus aculeatus (strain ATCC 16872 / CBS 172.66 / WB 5094)</name>
    <dbReference type="NCBI Taxonomy" id="690307"/>
    <lineage>
        <taxon>Eukaryota</taxon>
        <taxon>Fungi</taxon>
        <taxon>Dikarya</taxon>
        <taxon>Ascomycota</taxon>
        <taxon>Pezizomycotina</taxon>
        <taxon>Eurotiomycetes</taxon>
        <taxon>Eurotiomycetidae</taxon>
        <taxon>Eurotiales</taxon>
        <taxon>Aspergillaceae</taxon>
        <taxon>Aspergillus</taxon>
        <taxon>Aspergillus subgen. Circumdati</taxon>
    </lineage>
</organism>
<protein>
    <recommendedName>
        <fullName evidence="3">Hydrolase acrC</fullName>
        <ecNumber evidence="5">3.7.1.-</ecNumber>
    </recommendedName>
    <alternativeName>
        <fullName evidence="3">Acurin A biosynthesis cluster protein C</fullName>
    </alternativeName>
</protein>
<gene>
    <name evidence="3" type="primary">acrC</name>
    <name type="ORF">ASPACDRAFT_61993-1</name>
</gene>
<feature type="chain" id="PRO_0000450419" description="Hydrolase acrC">
    <location>
        <begin position="1"/>
        <end position="428"/>
    </location>
</feature>
<feature type="active site" evidence="1">
    <location>
        <position position="248"/>
    </location>
</feature>
<sequence>MFKFYPSDFFHFEFLRVLASAPAGGAETGECLAVLPQVPDGDAEAWYRAWTAQAQQARGLGDEALVSGDTVAASGAYLRASNYFRASEFFLHTRPDDPRLLAAMENSVAVFDKGVDLLDTCTVVRVEIPYEEEKGAARLPGRLYLPRSGAAQTGQGQSEDKLPLLIMTGGFDSTQEELYFFGPAAALPRGYAVLTFEGPGQGICLRRDGLRLRPDWEHVTTKVLDVVESQLAKDYPIDLERVAVVGASLGGYFALRAAADPRVRACVSCDACYDLFDVTRSRMPGWFINGWLSRRLSDGFFNWVVNKLAGWSFQLRWEFGHSMWVYGVESPAEVMRCMQQYHARGYLQKVKCSTFVTGAADTFYFTPKQNTEPIFEALGHVPLQKKRLWIGKGVEGGGLQAKIGAWAVFHQKMFVWLDEQFEIKRGTI</sequence>
<keyword id="KW-0378">Hydrolase</keyword>
<keyword id="KW-1185">Reference proteome</keyword>